<organism>
    <name type="scientific">Gallus gallus</name>
    <name type="common">Chicken</name>
    <dbReference type="NCBI Taxonomy" id="9031"/>
    <lineage>
        <taxon>Eukaryota</taxon>
        <taxon>Metazoa</taxon>
        <taxon>Chordata</taxon>
        <taxon>Craniata</taxon>
        <taxon>Vertebrata</taxon>
        <taxon>Euteleostomi</taxon>
        <taxon>Archelosauria</taxon>
        <taxon>Archosauria</taxon>
        <taxon>Dinosauria</taxon>
        <taxon>Saurischia</taxon>
        <taxon>Theropoda</taxon>
        <taxon>Coelurosauria</taxon>
        <taxon>Aves</taxon>
        <taxon>Neognathae</taxon>
        <taxon>Galloanserae</taxon>
        <taxon>Galliformes</taxon>
        <taxon>Phasianidae</taxon>
        <taxon>Phasianinae</taxon>
        <taxon>Gallus</taxon>
    </lineage>
</organism>
<gene>
    <name type="primary">CCN3</name>
    <name type="synonym">NOV</name>
</gene>
<accession>P28686</accession>
<evidence type="ECO:0000250" key="1"/>
<evidence type="ECO:0000250" key="2">
    <source>
        <dbReference type="UniProtKB" id="P48745"/>
    </source>
</evidence>
<evidence type="ECO:0000250" key="3">
    <source>
        <dbReference type="UniProtKB" id="Q9QZQ5"/>
    </source>
</evidence>
<evidence type="ECO:0000255" key="4"/>
<evidence type="ECO:0000255" key="5">
    <source>
        <dbReference type="PROSITE-ProRule" id="PRU00039"/>
    </source>
</evidence>
<evidence type="ECO:0000255" key="6">
    <source>
        <dbReference type="PROSITE-ProRule" id="PRU00210"/>
    </source>
</evidence>
<evidence type="ECO:0000255" key="7">
    <source>
        <dbReference type="PROSITE-ProRule" id="PRU00220"/>
    </source>
</evidence>
<evidence type="ECO:0000255" key="8">
    <source>
        <dbReference type="PROSITE-ProRule" id="PRU00653"/>
    </source>
</evidence>
<evidence type="ECO:0000305" key="9"/>
<proteinExistence type="evidence at transcript level"/>
<reference key="1">
    <citation type="journal article" date="1992" name="Mol. Cell. Biol.">
        <title>Proviral rearrangements and overexpression of a new cellular gene (nov) in myeloblastosis-associated virus type 1-induced nephroblastomas.</title>
        <authorList>
            <person name="Joliot V."/>
            <person name="Martinerie C."/>
            <person name="Dambrine G."/>
            <person name="Plassiart G."/>
            <person name="Brisac M."/>
            <person name="Crochet J."/>
            <person name="Perbal B."/>
        </authorList>
    </citation>
    <scope>NUCLEOTIDE SEQUENCE [MRNA]</scope>
    <source>
        <strain>Brown leghorn</strain>
    </source>
</reference>
<sequence length="351" mass="38268">METGGGQGLPVLLLLLLLLRPCEVSGREAACPRPCGGRCPAEPPRCAPGVPAVLDGCGCCLVCARQRGESCSPLLPCDESGGLYCDRGPEDGGGAGICMVLEGDNCVFDGMIYRNGETFQPSCKYQCTCRDGQIGCLPRCNLGLLLPGPDCPFPRKIEVPGECCEKWVCDPRDEVLLGGFAMAAYRQEATLGIDVSDSSANCIEQTTEWSACSKSCGMGFSTRVTNRNQQCEMVKQTRLCMMRPCENEEPSDKKGKKCIQTKKSMKAVRFEYKNCTSVQTYKPRYCGLCNDGRCCTPHNTKTIQVEFRCPQGKFLKKPMMLINTCVCHGNCPQSNNAFFQPLDPMSSEAKI</sequence>
<keyword id="KW-0965">Cell junction</keyword>
<keyword id="KW-0963">Cytoplasm</keyword>
<keyword id="KW-1015">Disulfide bond</keyword>
<keyword id="KW-0303">Gap junction</keyword>
<keyword id="KW-0325">Glycoprotein</keyword>
<keyword id="KW-0339">Growth factor</keyword>
<keyword id="KW-0656">Proto-oncogene</keyword>
<keyword id="KW-1185">Reference proteome</keyword>
<keyword id="KW-0964">Secreted</keyword>
<keyword id="KW-0732">Signal</keyword>
<protein>
    <recommendedName>
        <fullName evidence="9">CCN family member 3</fullName>
    </recommendedName>
    <alternativeName>
        <fullName evidence="2">Cellular communication network factor 3</fullName>
    </alternativeName>
    <alternativeName>
        <fullName>Nephroblastoma-overexpressed gene protein</fullName>
    </alternativeName>
    <alternativeName>
        <fullName>Protein NOV</fullName>
    </alternativeName>
</protein>
<name>CCN3_CHICK</name>
<dbReference type="EMBL" id="X59284">
    <property type="protein sequence ID" value="CAA41975.1"/>
    <property type="molecule type" value="mRNA"/>
</dbReference>
<dbReference type="PIR" id="S20078">
    <property type="entry name" value="S20078"/>
</dbReference>
<dbReference type="RefSeq" id="NP_990599.1">
    <property type="nucleotide sequence ID" value="NM_205268.1"/>
</dbReference>
<dbReference type="SMR" id="P28686"/>
<dbReference type="STRING" id="9031.ENSGALP00000046939"/>
<dbReference type="GlyCosmos" id="P28686">
    <property type="glycosylation" value="1 site, No reported glycans"/>
</dbReference>
<dbReference type="GlyGen" id="P28686">
    <property type="glycosylation" value="1 site"/>
</dbReference>
<dbReference type="PaxDb" id="9031-ENSGALP00000025912"/>
<dbReference type="GeneID" id="396204"/>
<dbReference type="KEGG" id="gga:396204"/>
<dbReference type="CTD" id="4856"/>
<dbReference type="VEuPathDB" id="HostDB:geneid_396204"/>
<dbReference type="eggNOG" id="ENOG502QR9V">
    <property type="taxonomic scope" value="Eukaryota"/>
</dbReference>
<dbReference type="InParanoid" id="P28686"/>
<dbReference type="OrthoDB" id="365605at2759"/>
<dbReference type="PhylomeDB" id="P28686"/>
<dbReference type="PRO" id="PR:P28686"/>
<dbReference type="Proteomes" id="UP000000539">
    <property type="component" value="Unassembled WGS sequence"/>
</dbReference>
<dbReference type="GO" id="GO:0005737">
    <property type="term" value="C:cytoplasm"/>
    <property type="evidence" value="ECO:0007669"/>
    <property type="project" value="UniProtKB-SubCell"/>
</dbReference>
<dbReference type="GO" id="GO:0031012">
    <property type="term" value="C:extracellular matrix"/>
    <property type="evidence" value="ECO:0000318"/>
    <property type="project" value="GO_Central"/>
</dbReference>
<dbReference type="GO" id="GO:0005615">
    <property type="term" value="C:extracellular space"/>
    <property type="evidence" value="ECO:0000318"/>
    <property type="project" value="GO_Central"/>
</dbReference>
<dbReference type="GO" id="GO:0005921">
    <property type="term" value="C:gap junction"/>
    <property type="evidence" value="ECO:0007669"/>
    <property type="project" value="UniProtKB-SubCell"/>
</dbReference>
<dbReference type="GO" id="GO:0008083">
    <property type="term" value="F:growth factor activity"/>
    <property type="evidence" value="ECO:0007669"/>
    <property type="project" value="UniProtKB-KW"/>
</dbReference>
<dbReference type="GO" id="GO:0008201">
    <property type="term" value="F:heparin binding"/>
    <property type="evidence" value="ECO:0000318"/>
    <property type="project" value="GO_Central"/>
</dbReference>
<dbReference type="GO" id="GO:0005178">
    <property type="term" value="F:integrin binding"/>
    <property type="evidence" value="ECO:0000318"/>
    <property type="project" value="GO_Central"/>
</dbReference>
<dbReference type="GO" id="GO:0007155">
    <property type="term" value="P:cell adhesion"/>
    <property type="evidence" value="ECO:0000318"/>
    <property type="project" value="GO_Central"/>
</dbReference>
<dbReference type="GO" id="GO:0002062">
    <property type="term" value="P:chondrocyte differentiation"/>
    <property type="evidence" value="ECO:0000318"/>
    <property type="project" value="GO_Central"/>
</dbReference>
<dbReference type="GO" id="GO:0045597">
    <property type="term" value="P:positive regulation of cell differentiation"/>
    <property type="evidence" value="ECO:0000318"/>
    <property type="project" value="GO_Central"/>
</dbReference>
<dbReference type="GO" id="GO:0007165">
    <property type="term" value="P:signal transduction"/>
    <property type="evidence" value="ECO:0000318"/>
    <property type="project" value="GO_Central"/>
</dbReference>
<dbReference type="FunFam" id="2.20.100.10:FF:000165">
    <property type="entry name" value="CCN family member 3"/>
    <property type="match status" value="1"/>
</dbReference>
<dbReference type="FunFam" id="2.10.70.10:FF:000015">
    <property type="entry name" value="CYR61 isoform 1"/>
    <property type="match status" value="1"/>
</dbReference>
<dbReference type="Gene3D" id="2.10.70.10">
    <property type="entry name" value="Complement Module, domain 1"/>
    <property type="match status" value="1"/>
</dbReference>
<dbReference type="Gene3D" id="2.20.100.10">
    <property type="entry name" value="Thrombospondin type-1 (TSP1) repeat"/>
    <property type="match status" value="1"/>
</dbReference>
<dbReference type="InterPro" id="IPR050941">
    <property type="entry name" value="CCN"/>
</dbReference>
<dbReference type="InterPro" id="IPR006207">
    <property type="entry name" value="Cys_knot_C"/>
</dbReference>
<dbReference type="InterPro" id="IPR006208">
    <property type="entry name" value="Glyco_hormone_CN"/>
</dbReference>
<dbReference type="InterPro" id="IPR009030">
    <property type="entry name" value="Growth_fac_rcpt_cys_sf"/>
</dbReference>
<dbReference type="InterPro" id="IPR000867">
    <property type="entry name" value="IGFBP-like"/>
</dbReference>
<dbReference type="InterPro" id="IPR012395">
    <property type="entry name" value="IGFBP_CNN"/>
</dbReference>
<dbReference type="InterPro" id="IPR017891">
    <property type="entry name" value="Insulin_GF-bd_Cys-rich_CS"/>
</dbReference>
<dbReference type="InterPro" id="IPR043973">
    <property type="entry name" value="TSP1_CCN"/>
</dbReference>
<dbReference type="InterPro" id="IPR000884">
    <property type="entry name" value="TSP1_rpt"/>
</dbReference>
<dbReference type="InterPro" id="IPR036383">
    <property type="entry name" value="TSP1_rpt_sf"/>
</dbReference>
<dbReference type="InterPro" id="IPR001007">
    <property type="entry name" value="VWF_dom"/>
</dbReference>
<dbReference type="PANTHER" id="PTHR11348:SF8">
    <property type="entry name" value="CCN FAMILY MEMBER 3"/>
    <property type="match status" value="1"/>
</dbReference>
<dbReference type="PANTHER" id="PTHR11348">
    <property type="entry name" value="CONNECTIVE TISSUE GROWTH FACTOR-RELATED"/>
    <property type="match status" value="1"/>
</dbReference>
<dbReference type="Pfam" id="PF00007">
    <property type="entry name" value="Cys_knot"/>
    <property type="match status" value="1"/>
</dbReference>
<dbReference type="Pfam" id="PF00219">
    <property type="entry name" value="IGFBP"/>
    <property type="match status" value="1"/>
</dbReference>
<dbReference type="Pfam" id="PF19035">
    <property type="entry name" value="TSP1_CCN"/>
    <property type="match status" value="1"/>
</dbReference>
<dbReference type="Pfam" id="PF00093">
    <property type="entry name" value="VWC"/>
    <property type="match status" value="1"/>
</dbReference>
<dbReference type="PIRSF" id="PIRSF036495">
    <property type="entry name" value="IGFBP_rP_CNN"/>
    <property type="match status" value="1"/>
</dbReference>
<dbReference type="SMART" id="SM00041">
    <property type="entry name" value="CT"/>
    <property type="match status" value="1"/>
</dbReference>
<dbReference type="SMART" id="SM00121">
    <property type="entry name" value="IB"/>
    <property type="match status" value="1"/>
</dbReference>
<dbReference type="SMART" id="SM00209">
    <property type="entry name" value="TSP1"/>
    <property type="match status" value="1"/>
</dbReference>
<dbReference type="SMART" id="SM00214">
    <property type="entry name" value="VWC"/>
    <property type="match status" value="1"/>
</dbReference>
<dbReference type="SUPFAM" id="SSF57603">
    <property type="entry name" value="FnI-like domain"/>
    <property type="match status" value="1"/>
</dbReference>
<dbReference type="SUPFAM" id="SSF57184">
    <property type="entry name" value="Growth factor receptor domain"/>
    <property type="match status" value="1"/>
</dbReference>
<dbReference type="SUPFAM" id="SSF82895">
    <property type="entry name" value="TSP-1 type 1 repeat"/>
    <property type="match status" value="1"/>
</dbReference>
<dbReference type="PROSITE" id="PS01185">
    <property type="entry name" value="CTCK_1"/>
    <property type="match status" value="1"/>
</dbReference>
<dbReference type="PROSITE" id="PS01225">
    <property type="entry name" value="CTCK_2"/>
    <property type="match status" value="1"/>
</dbReference>
<dbReference type="PROSITE" id="PS00222">
    <property type="entry name" value="IGFBP_N_1"/>
    <property type="match status" value="1"/>
</dbReference>
<dbReference type="PROSITE" id="PS51323">
    <property type="entry name" value="IGFBP_N_2"/>
    <property type="match status" value="1"/>
</dbReference>
<dbReference type="PROSITE" id="PS50092">
    <property type="entry name" value="TSP1"/>
    <property type="match status" value="1"/>
</dbReference>
<dbReference type="PROSITE" id="PS01208">
    <property type="entry name" value="VWFC_1"/>
    <property type="match status" value="1"/>
</dbReference>
<dbReference type="PROSITE" id="PS50184">
    <property type="entry name" value="VWFC_2"/>
    <property type="match status" value="1"/>
</dbReference>
<comment type="function">
    <text>Immediate-early protein likely to play a role in cell growth regulation. Its overexpression is associated with tumorigenesis and expression of a N-terminal-truncated version of CCN3 gene in chicken embryonic fibroblasts (CEF) is sufficient to induce the transformation of CEF in vitro.</text>
</comment>
<comment type="subcellular location">
    <subcellularLocation>
        <location evidence="3">Secreted</location>
    </subcellularLocation>
    <subcellularLocation>
        <location evidence="3">Cytoplasm</location>
    </subcellularLocation>
    <subcellularLocation>
        <location evidence="3">Cell junction</location>
        <location evidence="3">Gap junction</location>
    </subcellularLocation>
</comment>
<comment type="tissue specificity">
    <text>Brain and heart, and at a lower level in muscle and intestine, in the embryo. Lung and less so in brain and spleen, in adult chicken.</text>
</comment>
<comment type="developmental stage">
    <text>MAV1-induced nephroblastomas express a high level of NOV gene whose transcription is normally arrested in adult kidney.</text>
</comment>
<comment type="similarity">
    <text evidence="9">Belongs to the CCN family.</text>
</comment>
<feature type="signal peptide" evidence="4">
    <location>
        <begin position="1"/>
        <end position="24"/>
    </location>
</feature>
<feature type="chain" id="PRO_0000014413" description="CCN family member 3">
    <location>
        <begin position="25"/>
        <end position="351"/>
    </location>
</feature>
<feature type="domain" description="IGFBP N-terminal" evidence="8">
    <location>
        <begin position="27"/>
        <end position="101"/>
    </location>
</feature>
<feature type="domain" description="VWFC" evidence="7">
    <location>
        <begin position="104"/>
        <end position="170"/>
    </location>
</feature>
<feature type="domain" description="TSP type-1" evidence="6">
    <location>
        <begin position="201"/>
        <end position="246"/>
    </location>
</feature>
<feature type="domain" description="CTCK" evidence="5">
    <location>
        <begin position="258"/>
        <end position="332"/>
    </location>
</feature>
<feature type="glycosylation site" description="N-linked (GlcNAc...) asparagine" evidence="4">
    <location>
        <position position="274"/>
    </location>
</feature>
<feature type="disulfide bond" evidence="8">
    <location>
        <begin position="31"/>
        <end position="57"/>
    </location>
</feature>
<feature type="disulfide bond" evidence="8">
    <location>
        <begin position="35"/>
        <end position="59"/>
    </location>
</feature>
<feature type="disulfide bond" evidence="8">
    <location>
        <begin position="39"/>
        <end position="60"/>
    </location>
</feature>
<feature type="disulfide bond" evidence="8">
    <location>
        <begin position="46"/>
        <end position="63"/>
    </location>
</feature>
<feature type="disulfide bond" evidence="8">
    <location>
        <begin position="71"/>
        <end position="85"/>
    </location>
</feature>
<feature type="disulfide bond" evidence="8">
    <location>
        <begin position="77"/>
        <end position="98"/>
    </location>
</feature>
<feature type="disulfide bond" evidence="1">
    <location>
        <begin position="258"/>
        <end position="295"/>
    </location>
</feature>
<feature type="disulfide bond" evidence="1">
    <location>
        <begin position="275"/>
        <end position="309"/>
    </location>
</feature>
<feature type="disulfide bond" evidence="1">
    <location>
        <begin position="286"/>
        <end position="325"/>
    </location>
</feature>
<feature type="disulfide bond" evidence="1">
    <location>
        <begin position="289"/>
        <end position="327"/>
    </location>
</feature>
<feature type="disulfide bond" evidence="1">
    <location>
        <begin position="294"/>
        <end position="331"/>
    </location>
</feature>